<dbReference type="EMBL" id="CP001488">
    <property type="protein sequence ID" value="ACO01081.1"/>
    <property type="molecule type" value="Genomic_DNA"/>
</dbReference>
<dbReference type="RefSeq" id="WP_004683961.1">
    <property type="nucleotide sequence ID" value="NC_012441.1"/>
</dbReference>
<dbReference type="SMR" id="C0RJS3"/>
<dbReference type="KEGG" id="bmi:BMEA_A1359"/>
<dbReference type="HOGENOM" id="CLU_019250_2_2_5"/>
<dbReference type="UniPathway" id="UPA00148"/>
<dbReference type="Proteomes" id="UP000001748">
    <property type="component" value="Chromosome I"/>
</dbReference>
<dbReference type="GO" id="GO:0015420">
    <property type="term" value="F:ABC-type vitamin B12 transporter activity"/>
    <property type="evidence" value="ECO:0007669"/>
    <property type="project" value="UniProtKB-UniRule"/>
</dbReference>
<dbReference type="GO" id="GO:0003824">
    <property type="term" value="F:catalytic activity"/>
    <property type="evidence" value="ECO:0007669"/>
    <property type="project" value="InterPro"/>
</dbReference>
<dbReference type="GO" id="GO:0009236">
    <property type="term" value="P:cobalamin biosynthetic process"/>
    <property type="evidence" value="ECO:0007669"/>
    <property type="project" value="UniProtKB-UniRule"/>
</dbReference>
<dbReference type="CDD" id="cd05389">
    <property type="entry name" value="CobQ_N"/>
    <property type="match status" value="1"/>
</dbReference>
<dbReference type="CDD" id="cd01750">
    <property type="entry name" value="GATase1_CobQ"/>
    <property type="match status" value="1"/>
</dbReference>
<dbReference type="Gene3D" id="3.40.50.880">
    <property type="match status" value="1"/>
</dbReference>
<dbReference type="Gene3D" id="3.40.50.300">
    <property type="entry name" value="P-loop containing nucleotide triphosphate hydrolases"/>
    <property type="match status" value="1"/>
</dbReference>
<dbReference type="HAMAP" id="MF_00028">
    <property type="entry name" value="CobQ"/>
    <property type="match status" value="1"/>
</dbReference>
<dbReference type="InterPro" id="IPR029062">
    <property type="entry name" value="Class_I_gatase-like"/>
</dbReference>
<dbReference type="InterPro" id="IPR002586">
    <property type="entry name" value="CobQ/CobB/MinD/ParA_Nub-bd_dom"/>
</dbReference>
<dbReference type="InterPro" id="IPR033949">
    <property type="entry name" value="CobQ_GATase1"/>
</dbReference>
<dbReference type="InterPro" id="IPR047045">
    <property type="entry name" value="CobQ_N"/>
</dbReference>
<dbReference type="InterPro" id="IPR004459">
    <property type="entry name" value="CobQ_synth"/>
</dbReference>
<dbReference type="InterPro" id="IPR011698">
    <property type="entry name" value="GATase_3"/>
</dbReference>
<dbReference type="InterPro" id="IPR027417">
    <property type="entry name" value="P-loop_NTPase"/>
</dbReference>
<dbReference type="NCBIfam" id="TIGR00313">
    <property type="entry name" value="cobQ"/>
    <property type="match status" value="1"/>
</dbReference>
<dbReference type="NCBIfam" id="NF001989">
    <property type="entry name" value="PRK00784.1"/>
    <property type="match status" value="1"/>
</dbReference>
<dbReference type="PANTHER" id="PTHR21343:SF1">
    <property type="entry name" value="COBYRIC ACID SYNTHASE"/>
    <property type="match status" value="1"/>
</dbReference>
<dbReference type="PANTHER" id="PTHR21343">
    <property type="entry name" value="DETHIOBIOTIN SYNTHETASE"/>
    <property type="match status" value="1"/>
</dbReference>
<dbReference type="Pfam" id="PF01656">
    <property type="entry name" value="CbiA"/>
    <property type="match status" value="1"/>
</dbReference>
<dbReference type="Pfam" id="PF07685">
    <property type="entry name" value="GATase_3"/>
    <property type="match status" value="1"/>
</dbReference>
<dbReference type="SUPFAM" id="SSF52317">
    <property type="entry name" value="Class I glutamine amidotransferase-like"/>
    <property type="match status" value="1"/>
</dbReference>
<dbReference type="SUPFAM" id="SSF52540">
    <property type="entry name" value="P-loop containing nucleoside triphosphate hydrolases"/>
    <property type="match status" value="1"/>
</dbReference>
<dbReference type="PROSITE" id="PS51274">
    <property type="entry name" value="GATASE_COBBQ"/>
    <property type="match status" value="1"/>
</dbReference>
<organism>
    <name type="scientific">Brucella melitensis biotype 2 (strain ATCC 23457)</name>
    <dbReference type="NCBI Taxonomy" id="546272"/>
    <lineage>
        <taxon>Bacteria</taxon>
        <taxon>Pseudomonadati</taxon>
        <taxon>Pseudomonadota</taxon>
        <taxon>Alphaproteobacteria</taxon>
        <taxon>Hyphomicrobiales</taxon>
        <taxon>Brucellaceae</taxon>
        <taxon>Brucella/Ochrobactrum group</taxon>
        <taxon>Brucella</taxon>
    </lineage>
</organism>
<feature type="chain" id="PRO_1000116898" description="Cobyric acid synthase">
    <location>
        <begin position="1"/>
        <end position="483"/>
    </location>
</feature>
<feature type="domain" description="GATase cobBQ-type" evidence="1">
    <location>
        <begin position="251"/>
        <end position="438"/>
    </location>
</feature>
<feature type="active site" description="Nucleophile" evidence="1">
    <location>
        <position position="333"/>
    </location>
</feature>
<feature type="active site" evidence="1">
    <location>
        <position position="430"/>
    </location>
</feature>
<sequence>MARAIMFQGTGSDVGKSVLVAGLCRVARNRGLKVRPFKPQNMSNNAAVSDDGGEIGRAQWLQALACGVPSSVHMNPVLLKPQTDMGSQLIVQGQVRGEARGRYYQELKPQLMAAVMESFAKVGDGADLVLVEGAGSPAEINLRAGDIANMGFATHADVPVVLVGDIDRGGVIASLVGTHTILPQEDRAMVRGFLINKFRGDISLFDDSLAAITRFTGWRSFGVVPWLKAVSRLPAEDSVVLERAVRGDKKALIVAVPMLPRIANFDDLDPLKAEPAVEVVMVPPGSSLPADAGLVVLPGTKSTIADLLALRENGWDRELVAHVKRGGHVLGICGGFQMLGRRISDPAGIEGNVRDIEGLGLLDIETMTEPEKVVRNVEAVSLLHDEPLEGYEIHIGRTSGPDMARPFARIGDHDDGAVSPDGRIMGTYLHGVFSADRFRHHFLRALGVEGGQMNYRESVEEALGELAEGLEASLDIDGLFALA</sequence>
<gene>
    <name evidence="1" type="primary">cobQ</name>
    <name type="ordered locus">BMEA_A1359</name>
</gene>
<reference key="1">
    <citation type="submission" date="2009-03" db="EMBL/GenBank/DDBJ databases">
        <title>Brucella melitensis ATCC 23457 whole genome shotgun sequencing project.</title>
        <authorList>
            <person name="Setubal J.C."/>
            <person name="Boyle S."/>
            <person name="Crasta O.R."/>
            <person name="Gillespie J.J."/>
            <person name="Kenyon R.W."/>
            <person name="Lu J."/>
            <person name="Mane S."/>
            <person name="Nagrani S."/>
            <person name="Shallom J.M."/>
            <person name="Shallom S."/>
            <person name="Shukla M."/>
            <person name="Snyder E.E."/>
            <person name="Sobral B.W."/>
            <person name="Wattam A.R."/>
            <person name="Will R."/>
            <person name="Williams K."/>
            <person name="Yoo H."/>
            <person name="Munk C."/>
            <person name="Tapia R."/>
            <person name="Han C."/>
            <person name="Detter J.C."/>
            <person name="Bruce D."/>
            <person name="Brettin T.S."/>
        </authorList>
    </citation>
    <scope>NUCLEOTIDE SEQUENCE [LARGE SCALE GENOMIC DNA]</scope>
    <source>
        <strain>ATCC 23457</strain>
    </source>
</reference>
<accession>C0RJS3</accession>
<name>COBQ_BRUMB</name>
<evidence type="ECO:0000255" key="1">
    <source>
        <dbReference type="HAMAP-Rule" id="MF_00028"/>
    </source>
</evidence>
<protein>
    <recommendedName>
        <fullName evidence="1">Cobyric acid synthase</fullName>
    </recommendedName>
</protein>
<keyword id="KW-0169">Cobalamin biosynthesis</keyword>
<keyword id="KW-0315">Glutamine amidotransferase</keyword>
<proteinExistence type="inferred from homology"/>
<comment type="function">
    <text evidence="1">Catalyzes amidations at positions B, D, E, and G on adenosylcobyrinic A,C-diamide. NH(2) groups are provided by glutamine, and one molecule of ATP is hydrogenolyzed for each amidation.</text>
</comment>
<comment type="pathway">
    <text evidence="1">Cofactor biosynthesis; adenosylcobalamin biosynthesis.</text>
</comment>
<comment type="similarity">
    <text evidence="1">Belongs to the CobB/CobQ family. CobQ subfamily.</text>
</comment>